<sequence>MKEEKKLLLQEVEEKISASQGFILLRYLGFSAAYSREFRNSLSGVSAEFEVLKKRIFFKAIENSGFEIDSSDTGGHLGVVFAYDDAVSAAKQVLDFNKQHNDSLVFLAGRIDSANLSGKEVEAVAKLPSMKELRQQVVGLLAAPMSQVVGIMGSALSGVISCIDQKTQKN</sequence>
<reference key="1">
    <citation type="journal article" date="2003" name="Nucleic Acids Res.">
        <title>Genome sequence of Chlamydophila caviae (Chlamydia psittaci GPIC): examining the role of niche-specific genes in the evolution of the Chlamydiaceae.</title>
        <authorList>
            <person name="Read T.D."/>
            <person name="Myers G.S.A."/>
            <person name="Brunham R.C."/>
            <person name="Nelson W.C."/>
            <person name="Paulsen I.T."/>
            <person name="Heidelberg J.F."/>
            <person name="Holtzapple E.K."/>
            <person name="Khouri H.M."/>
            <person name="Federova N.B."/>
            <person name="Carty H.A."/>
            <person name="Umayam L.A."/>
            <person name="Haft D.H."/>
            <person name="Peterson J.D."/>
            <person name="Beanan M.J."/>
            <person name="White O."/>
            <person name="Salzberg S.L."/>
            <person name="Hsia R.-C."/>
            <person name="McClarty G."/>
            <person name="Rank R.G."/>
            <person name="Bavoil P.M."/>
            <person name="Fraser C.M."/>
        </authorList>
    </citation>
    <scope>NUCLEOTIDE SEQUENCE [LARGE SCALE GENOMIC DNA]</scope>
    <source>
        <strain>ATCC VR-813 / DSM 19441 / 03DC25 / GPIC</strain>
    </source>
</reference>
<organism>
    <name type="scientific">Chlamydia caviae (strain ATCC VR-813 / DSM 19441 / 03DC25 / GPIC)</name>
    <name type="common">Chlamydophila caviae</name>
    <dbReference type="NCBI Taxonomy" id="227941"/>
    <lineage>
        <taxon>Bacteria</taxon>
        <taxon>Pseudomonadati</taxon>
        <taxon>Chlamydiota</taxon>
        <taxon>Chlamydiia</taxon>
        <taxon>Chlamydiales</taxon>
        <taxon>Chlamydiaceae</taxon>
        <taxon>Chlamydia/Chlamydophila group</taxon>
        <taxon>Chlamydia</taxon>
    </lineage>
</organism>
<protein>
    <recommendedName>
        <fullName evidence="1">Large ribosomal subunit protein uL10</fullName>
    </recommendedName>
    <alternativeName>
        <fullName evidence="2">50S ribosomal protein L10</fullName>
    </alternativeName>
</protein>
<keyword id="KW-0687">Ribonucleoprotein</keyword>
<keyword id="KW-0689">Ribosomal protein</keyword>
<keyword id="KW-0694">RNA-binding</keyword>
<keyword id="KW-0699">rRNA-binding</keyword>
<evidence type="ECO:0000255" key="1">
    <source>
        <dbReference type="HAMAP-Rule" id="MF_00362"/>
    </source>
</evidence>
<evidence type="ECO:0000305" key="2"/>
<accession>Q822I9</accession>
<proteinExistence type="inferred from homology"/>
<comment type="function">
    <text evidence="1">Forms part of the ribosomal stalk, playing a central role in the interaction of the ribosome with GTP-bound translation factors.</text>
</comment>
<comment type="subunit">
    <text evidence="1">Part of the ribosomal stalk of the 50S ribosomal subunit. The N-terminus interacts with L11 and the large rRNA to form the base of the stalk. The C-terminus forms an elongated spine to which L12 dimers bind in a sequential fashion forming a multimeric L10(L12)X complex.</text>
</comment>
<comment type="similarity">
    <text evidence="1">Belongs to the universal ribosomal protein uL10 family.</text>
</comment>
<dbReference type="EMBL" id="AE015925">
    <property type="protein sequence ID" value="AAP05435.1"/>
    <property type="molecule type" value="Genomic_DNA"/>
</dbReference>
<dbReference type="RefSeq" id="WP_011006650.1">
    <property type="nucleotide sequence ID" value="NC_003361.3"/>
</dbReference>
<dbReference type="SMR" id="Q822I9"/>
<dbReference type="STRING" id="227941.CCA_00693"/>
<dbReference type="KEGG" id="cca:CCA_00693"/>
<dbReference type="eggNOG" id="COG0244">
    <property type="taxonomic scope" value="Bacteria"/>
</dbReference>
<dbReference type="HOGENOM" id="CLU_092227_1_2_0"/>
<dbReference type="OrthoDB" id="18754at2"/>
<dbReference type="Proteomes" id="UP000002193">
    <property type="component" value="Chromosome"/>
</dbReference>
<dbReference type="GO" id="GO:1990904">
    <property type="term" value="C:ribonucleoprotein complex"/>
    <property type="evidence" value="ECO:0007669"/>
    <property type="project" value="UniProtKB-KW"/>
</dbReference>
<dbReference type="GO" id="GO:0005840">
    <property type="term" value="C:ribosome"/>
    <property type="evidence" value="ECO:0007669"/>
    <property type="project" value="UniProtKB-KW"/>
</dbReference>
<dbReference type="GO" id="GO:0070180">
    <property type="term" value="F:large ribosomal subunit rRNA binding"/>
    <property type="evidence" value="ECO:0007669"/>
    <property type="project" value="UniProtKB-UniRule"/>
</dbReference>
<dbReference type="GO" id="GO:0006412">
    <property type="term" value="P:translation"/>
    <property type="evidence" value="ECO:0007669"/>
    <property type="project" value="UniProtKB-UniRule"/>
</dbReference>
<dbReference type="CDD" id="cd05797">
    <property type="entry name" value="Ribosomal_L10"/>
    <property type="match status" value="1"/>
</dbReference>
<dbReference type="Gene3D" id="3.30.70.1730">
    <property type="match status" value="1"/>
</dbReference>
<dbReference type="Gene3D" id="6.10.250.290">
    <property type="match status" value="1"/>
</dbReference>
<dbReference type="HAMAP" id="MF_00362">
    <property type="entry name" value="Ribosomal_uL10"/>
    <property type="match status" value="1"/>
</dbReference>
<dbReference type="InterPro" id="IPR001790">
    <property type="entry name" value="Ribosomal_uL10"/>
</dbReference>
<dbReference type="InterPro" id="IPR043141">
    <property type="entry name" value="Ribosomal_uL10-like_sf"/>
</dbReference>
<dbReference type="InterPro" id="IPR022973">
    <property type="entry name" value="Ribosomal_uL10_bac"/>
</dbReference>
<dbReference type="InterPro" id="IPR047865">
    <property type="entry name" value="Ribosomal_uL10_bac_type"/>
</dbReference>
<dbReference type="NCBIfam" id="NF000955">
    <property type="entry name" value="PRK00099.1-1"/>
    <property type="match status" value="1"/>
</dbReference>
<dbReference type="PANTHER" id="PTHR11560">
    <property type="entry name" value="39S RIBOSOMAL PROTEIN L10, MITOCHONDRIAL"/>
    <property type="match status" value="1"/>
</dbReference>
<dbReference type="Pfam" id="PF00466">
    <property type="entry name" value="Ribosomal_L10"/>
    <property type="match status" value="1"/>
</dbReference>
<dbReference type="SUPFAM" id="SSF160369">
    <property type="entry name" value="Ribosomal protein L10-like"/>
    <property type="match status" value="1"/>
</dbReference>
<feature type="chain" id="PRO_0000154610" description="Large ribosomal subunit protein uL10">
    <location>
        <begin position="1"/>
        <end position="170"/>
    </location>
</feature>
<name>RL10_CHLCV</name>
<gene>
    <name evidence="1" type="primary">rplJ</name>
    <name type="ordered locus">CCA_00693</name>
</gene>